<name>YDHE_BACSU</name>
<sequence length="395" mass="44545">MKTVLILNFPAEGHVNPTLGITKAFSDKGYDVHYISTEKYKKRLEAAGATVHLHRDLLRTTPIHVGSPNGILDFVKIHIKTSLDILQIVKDLSKSIQFDFVYYDKFGAGELVRDYLDIPGVSSSASFLFGEEHLKILPLHPESGAPLELDQECEDLLAKMKETYGVAPKNLVQFMNNKGELNVVYTSRYFQPESDRFGDECLFIGPSFPKRAEKTDFPIEQLKDEKVIYISMGTVLDHTEDFFNLCIDAFSGFNGKVVIAAGEKADLTKLKQAPENFIIAPYVPQLEVLEQSDVFITHGGMNSVNEGIHFSVPLVVMPHDKDQPMVAQRLSELHAGYVISKDEVNAQILKQAVDEVLRNDQYTAGIKKINQSFKECMDMEEVMERIDELIRQKNK</sequence>
<keyword id="KW-0328">Glycosyltransferase</keyword>
<keyword id="KW-1185">Reference proteome</keyword>
<keyword id="KW-0808">Transferase</keyword>
<organism>
    <name type="scientific">Bacillus subtilis (strain 168)</name>
    <dbReference type="NCBI Taxonomy" id="224308"/>
    <lineage>
        <taxon>Bacteria</taxon>
        <taxon>Bacillati</taxon>
        <taxon>Bacillota</taxon>
        <taxon>Bacilli</taxon>
        <taxon>Bacillales</taxon>
        <taxon>Bacillaceae</taxon>
        <taxon>Bacillus</taxon>
    </lineage>
</organism>
<protein>
    <recommendedName>
        <fullName>Uncharacterized UDP-glucosyltransferase YdhE</fullName>
        <ecNumber>2.4.1.-</ecNumber>
    </recommendedName>
</protein>
<evidence type="ECO:0000305" key="1"/>
<comment type="similarity">
    <text evidence="1">Belongs to the UDP-glycosyltransferase family.</text>
</comment>
<comment type="sequence caution" evidence="1">
    <conflict type="frameshift">
        <sequence resource="EMBL-CDS" id="BAA19696"/>
    </conflict>
</comment>
<accession>O05496</accession>
<accession>Q797E7</accession>
<proteinExistence type="inferred from homology"/>
<dbReference type="EC" id="2.4.1.-"/>
<dbReference type="EMBL" id="D88802">
    <property type="protein sequence ID" value="BAA19696.1"/>
    <property type="status" value="ALT_FRAME"/>
    <property type="molecule type" value="Genomic_DNA"/>
</dbReference>
<dbReference type="EMBL" id="AL009126">
    <property type="protein sequence ID" value="CAB12391.2"/>
    <property type="molecule type" value="Genomic_DNA"/>
</dbReference>
<dbReference type="PIR" id="A69784">
    <property type="entry name" value="A69784"/>
</dbReference>
<dbReference type="RefSeq" id="NP_388453.2">
    <property type="nucleotide sequence ID" value="NC_000964.3"/>
</dbReference>
<dbReference type="RefSeq" id="WP_003234124.1">
    <property type="nucleotide sequence ID" value="NZ_OZ025638.1"/>
</dbReference>
<dbReference type="SMR" id="O05496"/>
<dbReference type="FunCoup" id="O05496">
    <property type="interactions" value="69"/>
</dbReference>
<dbReference type="STRING" id="224308.BSU05720"/>
<dbReference type="CAZy" id="GT1">
    <property type="family name" value="Glycosyltransferase Family 1"/>
</dbReference>
<dbReference type="PaxDb" id="224308-BSU05720"/>
<dbReference type="EnsemblBacteria" id="CAB12391">
    <property type="protein sequence ID" value="CAB12391"/>
    <property type="gene ID" value="BSU_05720"/>
</dbReference>
<dbReference type="GeneID" id="939868"/>
<dbReference type="KEGG" id="bsu:BSU05720"/>
<dbReference type="PATRIC" id="fig|224308.179.peg.615"/>
<dbReference type="eggNOG" id="COG1819">
    <property type="taxonomic scope" value="Bacteria"/>
</dbReference>
<dbReference type="InParanoid" id="O05496"/>
<dbReference type="OrthoDB" id="6620093at2"/>
<dbReference type="PhylomeDB" id="O05496"/>
<dbReference type="BioCyc" id="BSUB:BSU05720-MONOMER"/>
<dbReference type="Proteomes" id="UP000001570">
    <property type="component" value="Chromosome"/>
</dbReference>
<dbReference type="GO" id="GO:0016758">
    <property type="term" value="F:hexosyltransferase activity"/>
    <property type="evidence" value="ECO:0007669"/>
    <property type="project" value="InterPro"/>
</dbReference>
<dbReference type="GO" id="GO:0008194">
    <property type="term" value="F:UDP-glycosyltransferase activity"/>
    <property type="evidence" value="ECO:0007669"/>
    <property type="project" value="InterPro"/>
</dbReference>
<dbReference type="CDD" id="cd03784">
    <property type="entry name" value="GT1_Gtf-like"/>
    <property type="match status" value="1"/>
</dbReference>
<dbReference type="FunFam" id="3.40.50.2000:FF:000072">
    <property type="entry name" value="Glycosyl transferase"/>
    <property type="match status" value="1"/>
</dbReference>
<dbReference type="Gene3D" id="3.40.50.2000">
    <property type="entry name" value="Glycogen Phosphorylase B"/>
    <property type="match status" value="2"/>
</dbReference>
<dbReference type="InterPro" id="IPR010610">
    <property type="entry name" value="EryCIII-like_C"/>
</dbReference>
<dbReference type="InterPro" id="IPR050271">
    <property type="entry name" value="UDP-glycosyltransferase"/>
</dbReference>
<dbReference type="InterPro" id="IPR002213">
    <property type="entry name" value="UDP_glucos_trans"/>
</dbReference>
<dbReference type="InterPro" id="IPR006326">
    <property type="entry name" value="UDPGT_MGT-like"/>
</dbReference>
<dbReference type="NCBIfam" id="TIGR01426">
    <property type="entry name" value="MGT"/>
    <property type="match status" value="1"/>
</dbReference>
<dbReference type="PANTHER" id="PTHR48043">
    <property type="entry name" value="EG:EG0003.4 PROTEIN-RELATED"/>
    <property type="match status" value="1"/>
</dbReference>
<dbReference type="PANTHER" id="PTHR48043:SF145">
    <property type="entry name" value="FI06409P-RELATED"/>
    <property type="match status" value="1"/>
</dbReference>
<dbReference type="Pfam" id="PF06722">
    <property type="entry name" value="EryCIII-like_C"/>
    <property type="match status" value="1"/>
</dbReference>
<dbReference type="SUPFAM" id="SSF53756">
    <property type="entry name" value="UDP-Glycosyltransferase/glycogen phosphorylase"/>
    <property type="match status" value="1"/>
</dbReference>
<feature type="chain" id="PRO_0000360677" description="Uncharacterized UDP-glucosyltransferase YdhE">
    <location>
        <begin position="1"/>
        <end position="395"/>
    </location>
</feature>
<reference key="1">
    <citation type="journal article" date="1997" name="Microbiology">
        <title>Nucleotide sequence and analysis of the phoB-rrnE-groESL region of the Bacillus subtilis chromosome.</title>
        <authorList>
            <person name="Sadaie Y."/>
            <person name="Yata K."/>
            <person name="Fujita M."/>
            <person name="Sagai H."/>
            <person name="Itaya M."/>
            <person name="Kasahara Y."/>
            <person name="Ogasawara N."/>
        </authorList>
    </citation>
    <scope>NUCLEOTIDE SEQUENCE [GENOMIC DNA]</scope>
    <source>
        <strain>168</strain>
    </source>
</reference>
<reference key="2">
    <citation type="journal article" date="1997" name="Nature">
        <title>The complete genome sequence of the Gram-positive bacterium Bacillus subtilis.</title>
        <authorList>
            <person name="Kunst F."/>
            <person name="Ogasawara N."/>
            <person name="Moszer I."/>
            <person name="Albertini A.M."/>
            <person name="Alloni G."/>
            <person name="Azevedo V."/>
            <person name="Bertero M.G."/>
            <person name="Bessieres P."/>
            <person name="Bolotin A."/>
            <person name="Borchert S."/>
            <person name="Borriss R."/>
            <person name="Boursier L."/>
            <person name="Brans A."/>
            <person name="Braun M."/>
            <person name="Brignell S.C."/>
            <person name="Bron S."/>
            <person name="Brouillet S."/>
            <person name="Bruschi C.V."/>
            <person name="Caldwell B."/>
            <person name="Capuano V."/>
            <person name="Carter N.M."/>
            <person name="Choi S.-K."/>
            <person name="Codani J.-J."/>
            <person name="Connerton I.F."/>
            <person name="Cummings N.J."/>
            <person name="Daniel R.A."/>
            <person name="Denizot F."/>
            <person name="Devine K.M."/>
            <person name="Duesterhoeft A."/>
            <person name="Ehrlich S.D."/>
            <person name="Emmerson P.T."/>
            <person name="Entian K.-D."/>
            <person name="Errington J."/>
            <person name="Fabret C."/>
            <person name="Ferrari E."/>
            <person name="Foulger D."/>
            <person name="Fritz C."/>
            <person name="Fujita M."/>
            <person name="Fujita Y."/>
            <person name="Fuma S."/>
            <person name="Galizzi A."/>
            <person name="Galleron N."/>
            <person name="Ghim S.-Y."/>
            <person name="Glaser P."/>
            <person name="Goffeau A."/>
            <person name="Golightly E.J."/>
            <person name="Grandi G."/>
            <person name="Guiseppi G."/>
            <person name="Guy B.J."/>
            <person name="Haga K."/>
            <person name="Haiech J."/>
            <person name="Harwood C.R."/>
            <person name="Henaut A."/>
            <person name="Hilbert H."/>
            <person name="Holsappel S."/>
            <person name="Hosono S."/>
            <person name="Hullo M.-F."/>
            <person name="Itaya M."/>
            <person name="Jones L.-M."/>
            <person name="Joris B."/>
            <person name="Karamata D."/>
            <person name="Kasahara Y."/>
            <person name="Klaerr-Blanchard M."/>
            <person name="Klein C."/>
            <person name="Kobayashi Y."/>
            <person name="Koetter P."/>
            <person name="Koningstein G."/>
            <person name="Krogh S."/>
            <person name="Kumano M."/>
            <person name="Kurita K."/>
            <person name="Lapidus A."/>
            <person name="Lardinois S."/>
            <person name="Lauber J."/>
            <person name="Lazarevic V."/>
            <person name="Lee S.-M."/>
            <person name="Levine A."/>
            <person name="Liu H."/>
            <person name="Masuda S."/>
            <person name="Mauel C."/>
            <person name="Medigue C."/>
            <person name="Medina N."/>
            <person name="Mellado R.P."/>
            <person name="Mizuno M."/>
            <person name="Moestl D."/>
            <person name="Nakai S."/>
            <person name="Noback M."/>
            <person name="Noone D."/>
            <person name="O'Reilly M."/>
            <person name="Ogawa K."/>
            <person name="Ogiwara A."/>
            <person name="Oudega B."/>
            <person name="Park S.-H."/>
            <person name="Parro V."/>
            <person name="Pohl T.M."/>
            <person name="Portetelle D."/>
            <person name="Porwollik S."/>
            <person name="Prescott A.M."/>
            <person name="Presecan E."/>
            <person name="Pujic P."/>
            <person name="Purnelle B."/>
            <person name="Rapoport G."/>
            <person name="Rey M."/>
            <person name="Reynolds S."/>
            <person name="Rieger M."/>
            <person name="Rivolta C."/>
            <person name="Rocha E."/>
            <person name="Roche B."/>
            <person name="Rose M."/>
            <person name="Sadaie Y."/>
            <person name="Sato T."/>
            <person name="Scanlan E."/>
            <person name="Schleich S."/>
            <person name="Schroeter R."/>
            <person name="Scoffone F."/>
            <person name="Sekiguchi J."/>
            <person name="Sekowska A."/>
            <person name="Seror S.J."/>
            <person name="Serror P."/>
            <person name="Shin B.-S."/>
            <person name="Soldo B."/>
            <person name="Sorokin A."/>
            <person name="Tacconi E."/>
            <person name="Takagi T."/>
            <person name="Takahashi H."/>
            <person name="Takemaru K."/>
            <person name="Takeuchi M."/>
            <person name="Tamakoshi A."/>
            <person name="Tanaka T."/>
            <person name="Terpstra P."/>
            <person name="Tognoni A."/>
            <person name="Tosato V."/>
            <person name="Uchiyama S."/>
            <person name="Vandenbol M."/>
            <person name="Vannier F."/>
            <person name="Vassarotti A."/>
            <person name="Viari A."/>
            <person name="Wambutt R."/>
            <person name="Wedler E."/>
            <person name="Wedler H."/>
            <person name="Weitzenegger T."/>
            <person name="Winters P."/>
            <person name="Wipat A."/>
            <person name="Yamamoto H."/>
            <person name="Yamane K."/>
            <person name="Yasumoto K."/>
            <person name="Yata K."/>
            <person name="Yoshida K."/>
            <person name="Yoshikawa H.-F."/>
            <person name="Zumstein E."/>
            <person name="Yoshikawa H."/>
            <person name="Danchin A."/>
        </authorList>
    </citation>
    <scope>NUCLEOTIDE SEQUENCE [LARGE SCALE GENOMIC DNA]</scope>
    <source>
        <strain>168</strain>
    </source>
</reference>
<reference key="3">
    <citation type="journal article" date="2009" name="Microbiology">
        <title>From a consortium sequence to a unified sequence: the Bacillus subtilis 168 reference genome a decade later.</title>
        <authorList>
            <person name="Barbe V."/>
            <person name="Cruveiller S."/>
            <person name="Kunst F."/>
            <person name="Lenoble P."/>
            <person name="Meurice G."/>
            <person name="Sekowska A."/>
            <person name="Vallenet D."/>
            <person name="Wang T."/>
            <person name="Moszer I."/>
            <person name="Medigue C."/>
            <person name="Danchin A."/>
        </authorList>
    </citation>
    <scope>SEQUENCE REVISION TO N-TERMINUS</scope>
</reference>
<gene>
    <name type="primary">ydhE</name>
    <name type="ordered locus">BSU05720</name>
</gene>